<name>HISX_DEIRA</name>
<accession>Q9RSI4</accession>
<sequence>MQVLQGAEARAALTRTFSQIPVPDAVLSRIEQTFGERLTPEQVVERILLDVRARGDDALRDWTERLDGPRPAELEVPAAELEAAQVAPELHAAIRLAAERVRAFYRQQPAHGFLEHGPDGALGQLVRPLGRVGVYVPGGLAPLISTLMHTAVPAQVAGVPDIVVTTPPGKDGQVHPAILVAARELGLSRVFKVGGAQAIAALAYGTASVPAVDKIAGPGNLFVVIAKRLVYGQTGIESLPGPTETLVVADDSASPRYVAADLLAQAEHNGAEPVLVSVSRELLLAVQAELNEQLENLPEPNRSWARDSVGARMKVVLADSLDEALDLANLYAPEHLCLLTRDPWSLLGQVRRAGGVFVGEASMEALGDYVAGPSHVMPTGGTARFMSPVNVRDFQNIISVVGVNEETLRRIGPAAATLARAEGLEAHARAVESRLK</sequence>
<feature type="chain" id="PRO_0000135766" description="Histidinol dehydrogenase">
    <location>
        <begin position="1"/>
        <end position="436"/>
    </location>
</feature>
<feature type="active site" description="Proton acceptor" evidence="1">
    <location>
        <position position="334"/>
    </location>
</feature>
<feature type="active site" description="Proton acceptor" evidence="1">
    <location>
        <position position="335"/>
    </location>
</feature>
<feature type="binding site" evidence="1">
    <location>
        <position position="135"/>
    </location>
    <ligand>
        <name>NAD(+)</name>
        <dbReference type="ChEBI" id="CHEBI:57540"/>
    </ligand>
</feature>
<feature type="binding site" evidence="1">
    <location>
        <position position="197"/>
    </location>
    <ligand>
        <name>NAD(+)</name>
        <dbReference type="ChEBI" id="CHEBI:57540"/>
    </ligand>
</feature>
<feature type="binding site" evidence="1">
    <location>
        <position position="220"/>
    </location>
    <ligand>
        <name>NAD(+)</name>
        <dbReference type="ChEBI" id="CHEBI:57540"/>
    </ligand>
</feature>
<feature type="binding site" evidence="1">
    <location>
        <position position="243"/>
    </location>
    <ligand>
        <name>substrate</name>
    </ligand>
</feature>
<feature type="binding site" evidence="1">
    <location>
        <position position="265"/>
    </location>
    <ligand>
        <name>substrate</name>
    </ligand>
</feature>
<feature type="binding site" evidence="1">
    <location>
        <position position="265"/>
    </location>
    <ligand>
        <name>Zn(2+)</name>
        <dbReference type="ChEBI" id="CHEBI:29105"/>
    </ligand>
</feature>
<feature type="binding site" evidence="1">
    <location>
        <position position="268"/>
    </location>
    <ligand>
        <name>substrate</name>
    </ligand>
</feature>
<feature type="binding site" evidence="1">
    <location>
        <position position="268"/>
    </location>
    <ligand>
        <name>Zn(2+)</name>
        <dbReference type="ChEBI" id="CHEBI:29105"/>
    </ligand>
</feature>
<feature type="binding site" evidence="1">
    <location>
        <position position="335"/>
    </location>
    <ligand>
        <name>substrate</name>
    </ligand>
</feature>
<feature type="binding site" evidence="1">
    <location>
        <position position="368"/>
    </location>
    <ligand>
        <name>substrate</name>
    </ligand>
</feature>
<feature type="binding site" evidence="1">
    <location>
        <position position="368"/>
    </location>
    <ligand>
        <name>Zn(2+)</name>
        <dbReference type="ChEBI" id="CHEBI:29105"/>
    </ligand>
</feature>
<feature type="binding site" evidence="1">
    <location>
        <position position="422"/>
    </location>
    <ligand>
        <name>substrate</name>
    </ligand>
</feature>
<feature type="binding site" evidence="1">
    <location>
        <position position="427"/>
    </location>
    <ligand>
        <name>substrate</name>
    </ligand>
</feature>
<feature type="binding site" evidence="1">
    <location>
        <position position="427"/>
    </location>
    <ligand>
        <name>Zn(2+)</name>
        <dbReference type="ChEBI" id="CHEBI:29105"/>
    </ligand>
</feature>
<gene>
    <name evidence="1" type="primary">hisD</name>
    <name type="ordered locus">DR_2140</name>
</gene>
<protein>
    <recommendedName>
        <fullName evidence="1">Histidinol dehydrogenase</fullName>
        <shortName evidence="1">HDH</shortName>
        <ecNumber evidence="1">1.1.1.23</ecNumber>
    </recommendedName>
</protein>
<dbReference type="EC" id="1.1.1.23" evidence="1"/>
<dbReference type="EMBL" id="AE000513">
    <property type="protein sequence ID" value="AAF11684.1"/>
    <property type="molecule type" value="Genomic_DNA"/>
</dbReference>
<dbReference type="PIR" id="A75311">
    <property type="entry name" value="A75311"/>
</dbReference>
<dbReference type="RefSeq" id="NP_295863.1">
    <property type="nucleotide sequence ID" value="NC_001263.1"/>
</dbReference>
<dbReference type="RefSeq" id="WP_010888771.1">
    <property type="nucleotide sequence ID" value="NC_001263.1"/>
</dbReference>
<dbReference type="SMR" id="Q9RSI4"/>
<dbReference type="FunCoup" id="Q9RSI4">
    <property type="interactions" value="472"/>
</dbReference>
<dbReference type="STRING" id="243230.DR_2140"/>
<dbReference type="PaxDb" id="243230-DR_2140"/>
<dbReference type="EnsemblBacteria" id="AAF11684">
    <property type="protein sequence ID" value="AAF11684"/>
    <property type="gene ID" value="DR_2140"/>
</dbReference>
<dbReference type="GeneID" id="69518381"/>
<dbReference type="KEGG" id="dra:DR_2140"/>
<dbReference type="PATRIC" id="fig|243230.17.peg.2363"/>
<dbReference type="eggNOG" id="COG0141">
    <property type="taxonomic scope" value="Bacteria"/>
</dbReference>
<dbReference type="HOGENOM" id="CLU_006732_3_3_0"/>
<dbReference type="InParanoid" id="Q9RSI4"/>
<dbReference type="OrthoDB" id="9805269at2"/>
<dbReference type="UniPathway" id="UPA00031">
    <property type="reaction ID" value="UER00014"/>
</dbReference>
<dbReference type="Proteomes" id="UP000002524">
    <property type="component" value="Chromosome 1"/>
</dbReference>
<dbReference type="GO" id="GO:0005737">
    <property type="term" value="C:cytoplasm"/>
    <property type="evidence" value="ECO:0000318"/>
    <property type="project" value="GO_Central"/>
</dbReference>
<dbReference type="GO" id="GO:0005829">
    <property type="term" value="C:cytosol"/>
    <property type="evidence" value="ECO:0000318"/>
    <property type="project" value="GO_Central"/>
</dbReference>
<dbReference type="GO" id="GO:0004399">
    <property type="term" value="F:histidinol dehydrogenase activity"/>
    <property type="evidence" value="ECO:0000318"/>
    <property type="project" value="GO_Central"/>
</dbReference>
<dbReference type="GO" id="GO:0051287">
    <property type="term" value="F:NAD binding"/>
    <property type="evidence" value="ECO:0007669"/>
    <property type="project" value="InterPro"/>
</dbReference>
<dbReference type="GO" id="GO:0008270">
    <property type="term" value="F:zinc ion binding"/>
    <property type="evidence" value="ECO:0007669"/>
    <property type="project" value="UniProtKB-UniRule"/>
</dbReference>
<dbReference type="GO" id="GO:0000105">
    <property type="term" value="P:L-histidine biosynthetic process"/>
    <property type="evidence" value="ECO:0000318"/>
    <property type="project" value="GO_Central"/>
</dbReference>
<dbReference type="CDD" id="cd06572">
    <property type="entry name" value="Histidinol_dh"/>
    <property type="match status" value="1"/>
</dbReference>
<dbReference type="FunFam" id="3.40.50.1980:FF:000001">
    <property type="entry name" value="Histidinol dehydrogenase"/>
    <property type="match status" value="1"/>
</dbReference>
<dbReference type="FunFam" id="1.20.5.1300:FF:000002">
    <property type="entry name" value="Histidinol dehydrogenase, chloroplastic"/>
    <property type="match status" value="1"/>
</dbReference>
<dbReference type="Gene3D" id="1.20.5.1300">
    <property type="match status" value="1"/>
</dbReference>
<dbReference type="Gene3D" id="3.40.50.1980">
    <property type="entry name" value="Nitrogenase molybdenum iron protein domain"/>
    <property type="match status" value="2"/>
</dbReference>
<dbReference type="HAMAP" id="MF_01024">
    <property type="entry name" value="HisD"/>
    <property type="match status" value="1"/>
</dbReference>
<dbReference type="InterPro" id="IPR016161">
    <property type="entry name" value="Ald_DH/histidinol_DH"/>
</dbReference>
<dbReference type="InterPro" id="IPR001692">
    <property type="entry name" value="Histidinol_DH_CS"/>
</dbReference>
<dbReference type="InterPro" id="IPR022695">
    <property type="entry name" value="Histidinol_DH_monofunct"/>
</dbReference>
<dbReference type="InterPro" id="IPR012131">
    <property type="entry name" value="Hstdl_DH"/>
</dbReference>
<dbReference type="NCBIfam" id="TIGR00069">
    <property type="entry name" value="hisD"/>
    <property type="match status" value="1"/>
</dbReference>
<dbReference type="PANTHER" id="PTHR21256:SF2">
    <property type="entry name" value="HISTIDINE BIOSYNTHESIS TRIFUNCTIONAL PROTEIN"/>
    <property type="match status" value="1"/>
</dbReference>
<dbReference type="PANTHER" id="PTHR21256">
    <property type="entry name" value="HISTIDINOL DEHYDROGENASE HDH"/>
    <property type="match status" value="1"/>
</dbReference>
<dbReference type="Pfam" id="PF00815">
    <property type="entry name" value="Histidinol_dh"/>
    <property type="match status" value="1"/>
</dbReference>
<dbReference type="PIRSF" id="PIRSF000099">
    <property type="entry name" value="Histidinol_dh"/>
    <property type="match status" value="1"/>
</dbReference>
<dbReference type="PRINTS" id="PR00083">
    <property type="entry name" value="HOLDHDRGNASE"/>
</dbReference>
<dbReference type="SUPFAM" id="SSF53720">
    <property type="entry name" value="ALDH-like"/>
    <property type="match status" value="1"/>
</dbReference>
<dbReference type="PROSITE" id="PS00611">
    <property type="entry name" value="HISOL_DEHYDROGENASE"/>
    <property type="match status" value="1"/>
</dbReference>
<reference key="1">
    <citation type="journal article" date="1999" name="Science">
        <title>Genome sequence of the radioresistant bacterium Deinococcus radiodurans R1.</title>
        <authorList>
            <person name="White O."/>
            <person name="Eisen J.A."/>
            <person name="Heidelberg J.F."/>
            <person name="Hickey E.K."/>
            <person name="Peterson J.D."/>
            <person name="Dodson R.J."/>
            <person name="Haft D.H."/>
            <person name="Gwinn M.L."/>
            <person name="Nelson W.C."/>
            <person name="Richardson D.L."/>
            <person name="Moffat K.S."/>
            <person name="Qin H."/>
            <person name="Jiang L."/>
            <person name="Pamphile W."/>
            <person name="Crosby M."/>
            <person name="Shen M."/>
            <person name="Vamathevan J.J."/>
            <person name="Lam P."/>
            <person name="McDonald L.A."/>
            <person name="Utterback T.R."/>
            <person name="Zalewski C."/>
            <person name="Makarova K.S."/>
            <person name="Aravind L."/>
            <person name="Daly M.J."/>
            <person name="Minton K.W."/>
            <person name="Fleischmann R.D."/>
            <person name="Ketchum K.A."/>
            <person name="Nelson K.E."/>
            <person name="Salzberg S.L."/>
            <person name="Smith H.O."/>
            <person name="Venter J.C."/>
            <person name="Fraser C.M."/>
        </authorList>
    </citation>
    <scope>NUCLEOTIDE SEQUENCE [LARGE SCALE GENOMIC DNA]</scope>
    <source>
        <strain>ATCC 13939 / DSM 20539 / JCM 16871 / CCUG 27074 / LMG 4051 / NBRC 15346 / NCIMB 9279 / VKM B-1422 / R1</strain>
    </source>
</reference>
<comment type="function">
    <text evidence="1">Catalyzes the sequential NAD-dependent oxidations of L-histidinol to L-histidinaldehyde and then to L-histidine.</text>
</comment>
<comment type="catalytic activity">
    <reaction evidence="1">
        <text>L-histidinol + 2 NAD(+) + H2O = L-histidine + 2 NADH + 3 H(+)</text>
        <dbReference type="Rhea" id="RHEA:20641"/>
        <dbReference type="ChEBI" id="CHEBI:15377"/>
        <dbReference type="ChEBI" id="CHEBI:15378"/>
        <dbReference type="ChEBI" id="CHEBI:57540"/>
        <dbReference type="ChEBI" id="CHEBI:57595"/>
        <dbReference type="ChEBI" id="CHEBI:57699"/>
        <dbReference type="ChEBI" id="CHEBI:57945"/>
        <dbReference type="EC" id="1.1.1.23"/>
    </reaction>
</comment>
<comment type="cofactor">
    <cofactor evidence="1">
        <name>Zn(2+)</name>
        <dbReference type="ChEBI" id="CHEBI:29105"/>
    </cofactor>
    <text evidence="1">Binds 1 zinc ion per subunit.</text>
</comment>
<comment type="pathway">
    <text evidence="1">Amino-acid biosynthesis; L-histidine biosynthesis; L-histidine from 5-phospho-alpha-D-ribose 1-diphosphate: step 9/9.</text>
</comment>
<comment type="similarity">
    <text evidence="1">Belongs to the histidinol dehydrogenase family.</text>
</comment>
<evidence type="ECO:0000255" key="1">
    <source>
        <dbReference type="HAMAP-Rule" id="MF_01024"/>
    </source>
</evidence>
<organism>
    <name type="scientific">Deinococcus radiodurans (strain ATCC 13939 / DSM 20539 / JCM 16871 / CCUG 27074 / LMG 4051 / NBRC 15346 / NCIMB 9279 / VKM B-1422 / R1)</name>
    <dbReference type="NCBI Taxonomy" id="243230"/>
    <lineage>
        <taxon>Bacteria</taxon>
        <taxon>Thermotogati</taxon>
        <taxon>Deinococcota</taxon>
        <taxon>Deinococci</taxon>
        <taxon>Deinococcales</taxon>
        <taxon>Deinococcaceae</taxon>
        <taxon>Deinococcus</taxon>
    </lineage>
</organism>
<keyword id="KW-0028">Amino-acid biosynthesis</keyword>
<keyword id="KW-0368">Histidine biosynthesis</keyword>
<keyword id="KW-0479">Metal-binding</keyword>
<keyword id="KW-0520">NAD</keyword>
<keyword id="KW-0560">Oxidoreductase</keyword>
<keyword id="KW-1185">Reference proteome</keyword>
<keyword id="KW-0862">Zinc</keyword>
<proteinExistence type="inferred from homology"/>